<proteinExistence type="inferred from homology"/>
<dbReference type="EC" id="1.10.3.9" evidence="2"/>
<dbReference type="EMBL" id="AB240139">
    <property type="protein sequence ID" value="BAE47993.1"/>
    <property type="molecule type" value="Genomic_DNA"/>
</dbReference>
<dbReference type="RefSeq" id="YP_398855.1">
    <property type="nucleotide sequence ID" value="NC_007602.1"/>
</dbReference>
<dbReference type="SMR" id="Q33C42"/>
<dbReference type="GeneID" id="3776370"/>
<dbReference type="KEGG" id="nto:3776370"/>
<dbReference type="OrthoDB" id="1273448at2759"/>
<dbReference type="GO" id="GO:0009535">
    <property type="term" value="C:chloroplast thylakoid membrane"/>
    <property type="evidence" value="ECO:0007669"/>
    <property type="project" value="UniProtKB-SubCell"/>
</dbReference>
<dbReference type="GO" id="GO:0009523">
    <property type="term" value="C:photosystem II"/>
    <property type="evidence" value="ECO:0007669"/>
    <property type="project" value="UniProtKB-KW"/>
</dbReference>
<dbReference type="GO" id="GO:0016168">
    <property type="term" value="F:chlorophyll binding"/>
    <property type="evidence" value="ECO:0007669"/>
    <property type="project" value="UniProtKB-UniRule"/>
</dbReference>
<dbReference type="GO" id="GO:0045156">
    <property type="term" value="F:electron transporter, transferring electrons within the cyclic electron transport pathway of photosynthesis activity"/>
    <property type="evidence" value="ECO:0007669"/>
    <property type="project" value="InterPro"/>
</dbReference>
<dbReference type="GO" id="GO:0005506">
    <property type="term" value="F:iron ion binding"/>
    <property type="evidence" value="ECO:0007669"/>
    <property type="project" value="UniProtKB-UniRule"/>
</dbReference>
<dbReference type="GO" id="GO:0010242">
    <property type="term" value="F:oxygen evolving activity"/>
    <property type="evidence" value="ECO:0007669"/>
    <property type="project" value="UniProtKB-EC"/>
</dbReference>
<dbReference type="GO" id="GO:0009772">
    <property type="term" value="P:photosynthetic electron transport in photosystem II"/>
    <property type="evidence" value="ECO:0007669"/>
    <property type="project" value="InterPro"/>
</dbReference>
<dbReference type="CDD" id="cd09288">
    <property type="entry name" value="Photosystem-II_D2"/>
    <property type="match status" value="1"/>
</dbReference>
<dbReference type="FunFam" id="1.20.85.10:FF:000001">
    <property type="entry name" value="photosystem II D2 protein-like"/>
    <property type="match status" value="1"/>
</dbReference>
<dbReference type="Gene3D" id="1.20.85.10">
    <property type="entry name" value="Photosystem II protein D1-like"/>
    <property type="match status" value="1"/>
</dbReference>
<dbReference type="HAMAP" id="MF_01383">
    <property type="entry name" value="PSII_PsbD_D2"/>
    <property type="match status" value="1"/>
</dbReference>
<dbReference type="InterPro" id="IPR055266">
    <property type="entry name" value="D1/D2"/>
</dbReference>
<dbReference type="InterPro" id="IPR036854">
    <property type="entry name" value="Photo_II_D1/D2_sf"/>
</dbReference>
<dbReference type="InterPro" id="IPR000484">
    <property type="entry name" value="Photo_RC_L/M"/>
</dbReference>
<dbReference type="InterPro" id="IPR055265">
    <property type="entry name" value="Photo_RC_L/M_CS"/>
</dbReference>
<dbReference type="InterPro" id="IPR005868">
    <property type="entry name" value="PSII_PsbD/D2"/>
</dbReference>
<dbReference type="NCBIfam" id="TIGR01152">
    <property type="entry name" value="psbD"/>
    <property type="match status" value="1"/>
</dbReference>
<dbReference type="PANTHER" id="PTHR33149:SF12">
    <property type="entry name" value="PHOTOSYSTEM II D2 PROTEIN"/>
    <property type="match status" value="1"/>
</dbReference>
<dbReference type="PANTHER" id="PTHR33149">
    <property type="entry name" value="PHOTOSYSTEM II PROTEIN D1"/>
    <property type="match status" value="1"/>
</dbReference>
<dbReference type="Pfam" id="PF00124">
    <property type="entry name" value="Photo_RC"/>
    <property type="match status" value="1"/>
</dbReference>
<dbReference type="PRINTS" id="PR00256">
    <property type="entry name" value="REACTNCENTRE"/>
</dbReference>
<dbReference type="SUPFAM" id="SSF81483">
    <property type="entry name" value="Bacterial photosystem II reaction centre, L and M subunits"/>
    <property type="match status" value="1"/>
</dbReference>
<dbReference type="PROSITE" id="PS00244">
    <property type="entry name" value="REACTION_CENTER"/>
    <property type="match status" value="1"/>
</dbReference>
<accession>Q33C42</accession>
<name>PSBD_NICTO</name>
<sequence length="353" mass="39535">MTIALGKFTKDENDLFDIMDDWLRRDRFVFVGWSGLLLFPCAYFAVGGWFTGTTFVTSWYTHGLASSYLEGCNFLTAAVSTPANSLAHSLLLLWGPEAQGDFTRWCQLGGLWTFVALHGAFGLIGFMLRQFELARSVQLRPYNAIAFSGPIAVFVSVFLIYPLGQSGWFFAPSFGVAAIFRFILFFQGFHNWTLNPFHMMGVAGVLGAALLCAIHGATVENTLFEDGDGANTFRAFNPTQAEETYSMVTANRFWSQIFGVAFSNKRWLHFFMLFVPVTGLWMSALGVVGLALNLRAYDFVSQEIRAAEDPEFETFYTKNILLNEGIRAWMAAQDQPHENLIFPEEVLPRGNAL</sequence>
<comment type="function">
    <text evidence="2">Photosystem II (PSII) is a light-driven water:plastoquinone oxidoreductase that uses light energy to abstract electrons from H(2)O, generating O(2) and a proton gradient subsequently used for ATP formation. It consists of a core antenna complex that captures photons, and an electron transfer chain that converts photonic excitation into a charge separation. The D1/D2 (PsbA/PsbD) reaction center heterodimer binds P680, the primary electron donor of PSII as well as several subsequent electron acceptors. D2 is needed for assembly of a stable PSII complex.</text>
</comment>
<comment type="catalytic activity">
    <reaction evidence="2">
        <text>2 a plastoquinone + 4 hnu + 2 H2O = 2 a plastoquinol + O2</text>
        <dbReference type="Rhea" id="RHEA:36359"/>
        <dbReference type="Rhea" id="RHEA-COMP:9561"/>
        <dbReference type="Rhea" id="RHEA-COMP:9562"/>
        <dbReference type="ChEBI" id="CHEBI:15377"/>
        <dbReference type="ChEBI" id="CHEBI:15379"/>
        <dbReference type="ChEBI" id="CHEBI:17757"/>
        <dbReference type="ChEBI" id="CHEBI:30212"/>
        <dbReference type="ChEBI" id="CHEBI:62192"/>
        <dbReference type="EC" id="1.10.3.9"/>
    </reaction>
</comment>
<comment type="cofactor">
    <text evidence="2">The D1/D2 heterodimer binds P680, chlorophylls that are the primary electron donor of PSII, and subsequent electron acceptors. It shares a non-heme iron and each subunit binds pheophytin, quinone, additional chlorophylls, carotenoids and lipids. There is also a Cl(-1) ion associated with D1 and D2, which is required for oxygen evolution. The PSII complex binds additional chlorophylls, carotenoids and specific lipids.</text>
</comment>
<comment type="subunit">
    <text evidence="2">PSII is composed of 1 copy each of membrane proteins PsbA, PsbB, PsbC, PsbD, PsbE, PsbF, PsbH, PsbI, PsbJ, PsbK, PsbL, PsbM, PsbT, PsbX, PsbY, PsbZ, Psb30/Ycf12, at least 3 peripheral proteins of the oxygen-evolving complex and a large number of cofactors. It forms dimeric complexes.</text>
</comment>
<comment type="subcellular location">
    <subcellularLocation>
        <location evidence="2">Plastid</location>
        <location evidence="2">Chloroplast thylakoid membrane</location>
        <topology evidence="2">Multi-pass membrane protein</topology>
    </subcellularLocation>
</comment>
<comment type="miscellaneous">
    <text evidence="2">2 of the reaction center chlorophylls (ChlD1 and ChlD2) are entirely coordinated by water.</text>
</comment>
<comment type="similarity">
    <text evidence="2">Belongs to the reaction center PufL/M/PsbA/D family.</text>
</comment>
<evidence type="ECO:0000250" key="1">
    <source>
        <dbReference type="UniProtKB" id="P56761"/>
    </source>
</evidence>
<evidence type="ECO:0000255" key="2">
    <source>
        <dbReference type="HAMAP-Rule" id="MF_01383"/>
    </source>
</evidence>
<feature type="initiator methionine" description="Removed" evidence="1">
    <location>
        <position position="1"/>
    </location>
</feature>
<feature type="chain" id="PRO_0000359672" description="Photosystem II D2 protein">
    <location>
        <begin position="2"/>
        <end position="353"/>
    </location>
</feature>
<feature type="transmembrane region" description="Helical" evidence="2">
    <location>
        <begin position="41"/>
        <end position="61"/>
    </location>
</feature>
<feature type="transmembrane region" description="Helical" evidence="2">
    <location>
        <begin position="125"/>
        <end position="141"/>
    </location>
</feature>
<feature type="transmembrane region" description="Helical" evidence="2">
    <location>
        <begin position="153"/>
        <end position="166"/>
    </location>
</feature>
<feature type="transmembrane region" description="Helical" evidence="2">
    <location>
        <begin position="208"/>
        <end position="228"/>
    </location>
</feature>
<feature type="transmembrane region" description="Helical" evidence="2">
    <location>
        <begin position="279"/>
        <end position="295"/>
    </location>
</feature>
<feature type="binding site" description="axial binding residue" evidence="2">
    <location>
        <position position="118"/>
    </location>
    <ligand>
        <name>chlorophyll a</name>
        <dbReference type="ChEBI" id="CHEBI:58416"/>
        <label>ChlzD2</label>
    </ligand>
    <ligandPart>
        <name>Mg</name>
        <dbReference type="ChEBI" id="CHEBI:25107"/>
    </ligandPart>
</feature>
<feature type="binding site" evidence="2">
    <location>
        <position position="130"/>
    </location>
    <ligand>
        <name>pheophytin a</name>
        <dbReference type="ChEBI" id="CHEBI:136840"/>
        <label>D2</label>
    </ligand>
</feature>
<feature type="binding site" evidence="2">
    <location>
        <position position="143"/>
    </location>
    <ligand>
        <name>pheophytin a</name>
        <dbReference type="ChEBI" id="CHEBI:136840"/>
        <label>D2</label>
    </ligand>
</feature>
<feature type="binding site" description="axial binding residue" evidence="2">
    <location>
        <position position="198"/>
    </location>
    <ligand>
        <name>chlorophyll a</name>
        <dbReference type="ChEBI" id="CHEBI:58416"/>
        <label>PD2</label>
    </ligand>
    <ligandPart>
        <name>Mg</name>
        <dbReference type="ChEBI" id="CHEBI:25107"/>
    </ligandPart>
</feature>
<feature type="binding site" evidence="2">
    <location>
        <position position="215"/>
    </location>
    <ligand>
        <name>a plastoquinone</name>
        <dbReference type="ChEBI" id="CHEBI:17757"/>
        <label>Q(A)</label>
    </ligand>
</feature>
<feature type="binding site" evidence="2">
    <location>
        <position position="215"/>
    </location>
    <ligand>
        <name>Fe cation</name>
        <dbReference type="ChEBI" id="CHEBI:24875"/>
        <note>ligand shared with heterodimeric partner</note>
    </ligand>
</feature>
<feature type="binding site" evidence="2">
    <location>
        <position position="262"/>
    </location>
    <ligand>
        <name>a plastoquinone</name>
        <dbReference type="ChEBI" id="CHEBI:17757"/>
        <label>Q(A)</label>
    </ligand>
</feature>
<feature type="binding site" evidence="2">
    <location>
        <position position="269"/>
    </location>
    <ligand>
        <name>Fe cation</name>
        <dbReference type="ChEBI" id="CHEBI:24875"/>
        <note>ligand shared with heterodimeric partner</note>
    </ligand>
</feature>
<feature type="modified residue" description="N-acetylthreonine" evidence="1">
    <location>
        <position position="2"/>
    </location>
</feature>
<feature type="modified residue" description="Phosphothreonine" evidence="1">
    <location>
        <position position="2"/>
    </location>
</feature>
<keyword id="KW-0007">Acetylation</keyword>
<keyword id="KW-0148">Chlorophyll</keyword>
<keyword id="KW-0150">Chloroplast</keyword>
<keyword id="KW-0157">Chromophore</keyword>
<keyword id="KW-0249">Electron transport</keyword>
<keyword id="KW-0408">Iron</keyword>
<keyword id="KW-0460">Magnesium</keyword>
<keyword id="KW-0472">Membrane</keyword>
<keyword id="KW-0479">Metal-binding</keyword>
<keyword id="KW-0560">Oxidoreductase</keyword>
<keyword id="KW-0597">Phosphoprotein</keyword>
<keyword id="KW-0602">Photosynthesis</keyword>
<keyword id="KW-0604">Photosystem II</keyword>
<keyword id="KW-0934">Plastid</keyword>
<keyword id="KW-0793">Thylakoid</keyword>
<keyword id="KW-0812">Transmembrane</keyword>
<keyword id="KW-1133">Transmembrane helix</keyword>
<keyword id="KW-0813">Transport</keyword>
<organism>
    <name type="scientific">Nicotiana tomentosiformis</name>
    <name type="common">Tobacco</name>
    <dbReference type="NCBI Taxonomy" id="4098"/>
    <lineage>
        <taxon>Eukaryota</taxon>
        <taxon>Viridiplantae</taxon>
        <taxon>Streptophyta</taxon>
        <taxon>Embryophyta</taxon>
        <taxon>Tracheophyta</taxon>
        <taxon>Spermatophyta</taxon>
        <taxon>Magnoliopsida</taxon>
        <taxon>eudicotyledons</taxon>
        <taxon>Gunneridae</taxon>
        <taxon>Pentapetalae</taxon>
        <taxon>asterids</taxon>
        <taxon>lamiids</taxon>
        <taxon>Solanales</taxon>
        <taxon>Solanaceae</taxon>
        <taxon>Nicotianoideae</taxon>
        <taxon>Nicotianeae</taxon>
        <taxon>Nicotiana</taxon>
    </lineage>
</organism>
<geneLocation type="chloroplast"/>
<protein>
    <recommendedName>
        <fullName evidence="2">Photosystem II D2 protein</fullName>
        <shortName evidence="2">PSII D2 protein</shortName>
        <ecNumber evidence="2">1.10.3.9</ecNumber>
    </recommendedName>
    <alternativeName>
        <fullName evidence="2">Photosystem Q(A) protein</fullName>
    </alternativeName>
</protein>
<reference key="1">
    <citation type="journal article" date="2006" name="Mol. Genet. Genomics">
        <title>The chloroplast genome of Nicotiana sylvestris and Nicotiana tomentosiformis: complete sequencing confirms that the Nicotiana sylvestris progenitor is the maternal genome donor of Nicotiana tabacum.</title>
        <authorList>
            <person name="Yukawa M."/>
            <person name="Tsudzuki T."/>
            <person name="Sugiura M."/>
        </authorList>
    </citation>
    <scope>NUCLEOTIDE SEQUENCE [LARGE SCALE GENOMIC DNA]</scope>
</reference>
<gene>
    <name evidence="2" type="primary">psbD</name>
</gene>